<protein>
    <recommendedName>
        <fullName evidence="1">Serine hydroxymethyltransferase</fullName>
        <shortName evidence="1">SHMT</shortName>
        <shortName evidence="1">Serine methylase</shortName>
        <ecNumber evidence="1">2.1.2.1</ecNumber>
    </recommendedName>
</protein>
<keyword id="KW-0028">Amino-acid biosynthesis</keyword>
<keyword id="KW-0963">Cytoplasm</keyword>
<keyword id="KW-0554">One-carbon metabolism</keyword>
<keyword id="KW-0663">Pyridoxal phosphate</keyword>
<keyword id="KW-0808">Transferase</keyword>
<comment type="function">
    <text evidence="1">Catalyzes the reversible interconversion of serine and glycine with tetrahydrofolate (THF) serving as the one-carbon carrier. This reaction serves as the major source of one-carbon groups required for the biosynthesis of purines, thymidylate, methionine, and other important biomolecules. Also exhibits THF-independent aldolase activity toward beta-hydroxyamino acids, producing glycine and aldehydes, via a retro-aldol mechanism.</text>
</comment>
<comment type="catalytic activity">
    <reaction evidence="1">
        <text>(6R)-5,10-methylene-5,6,7,8-tetrahydrofolate + glycine + H2O = (6S)-5,6,7,8-tetrahydrofolate + L-serine</text>
        <dbReference type="Rhea" id="RHEA:15481"/>
        <dbReference type="ChEBI" id="CHEBI:15377"/>
        <dbReference type="ChEBI" id="CHEBI:15636"/>
        <dbReference type="ChEBI" id="CHEBI:33384"/>
        <dbReference type="ChEBI" id="CHEBI:57305"/>
        <dbReference type="ChEBI" id="CHEBI:57453"/>
        <dbReference type="EC" id="2.1.2.1"/>
    </reaction>
</comment>
<comment type="cofactor">
    <cofactor evidence="1">
        <name>pyridoxal 5'-phosphate</name>
        <dbReference type="ChEBI" id="CHEBI:597326"/>
    </cofactor>
</comment>
<comment type="pathway">
    <text evidence="1">One-carbon metabolism; tetrahydrofolate interconversion.</text>
</comment>
<comment type="pathway">
    <text evidence="1">Amino-acid biosynthesis; glycine biosynthesis; glycine from L-serine: step 1/1.</text>
</comment>
<comment type="subunit">
    <text evidence="1">Homodimer.</text>
</comment>
<comment type="subcellular location">
    <subcellularLocation>
        <location evidence="1">Cytoplasm</location>
    </subcellularLocation>
</comment>
<comment type="similarity">
    <text evidence="1">Belongs to the SHMT family.</text>
</comment>
<accession>A3M736</accession>
<feature type="chain" id="PRO_1000091508" description="Serine hydroxymethyltransferase">
    <location>
        <begin position="1"/>
        <end position="417"/>
    </location>
</feature>
<feature type="binding site" evidence="1">
    <location>
        <position position="120"/>
    </location>
    <ligand>
        <name>(6S)-5,6,7,8-tetrahydrofolate</name>
        <dbReference type="ChEBI" id="CHEBI:57453"/>
    </ligand>
</feature>
<feature type="binding site" evidence="1">
    <location>
        <begin position="124"/>
        <end position="126"/>
    </location>
    <ligand>
        <name>(6S)-5,6,7,8-tetrahydrofolate</name>
        <dbReference type="ChEBI" id="CHEBI:57453"/>
    </ligand>
</feature>
<feature type="binding site" evidence="1">
    <location>
        <begin position="354"/>
        <end position="356"/>
    </location>
    <ligand>
        <name>(6S)-5,6,7,8-tetrahydrofolate</name>
        <dbReference type="ChEBI" id="CHEBI:57453"/>
    </ligand>
</feature>
<feature type="site" description="Plays an important role in substrate specificity" evidence="1">
    <location>
        <position position="228"/>
    </location>
</feature>
<feature type="modified residue" description="N6-(pyridoxal phosphate)lysine" evidence="1">
    <location>
        <position position="229"/>
    </location>
</feature>
<name>GLYA_ACIBT</name>
<evidence type="ECO:0000255" key="1">
    <source>
        <dbReference type="HAMAP-Rule" id="MF_00051"/>
    </source>
</evidence>
<dbReference type="EC" id="2.1.2.1" evidence="1"/>
<dbReference type="EMBL" id="CP000521">
    <property type="protein sequence ID" value="ABO12730.2"/>
    <property type="molecule type" value="Genomic_DNA"/>
</dbReference>
<dbReference type="RefSeq" id="WP_000457893.1">
    <property type="nucleotide sequence ID" value="NZ_CP053098.1"/>
</dbReference>
<dbReference type="SMR" id="A3M736"/>
<dbReference type="GeneID" id="92894564"/>
<dbReference type="KEGG" id="acb:A1S_2307"/>
<dbReference type="HOGENOM" id="CLU_022477_2_1_6"/>
<dbReference type="UniPathway" id="UPA00193"/>
<dbReference type="UniPathway" id="UPA00288">
    <property type="reaction ID" value="UER01023"/>
</dbReference>
<dbReference type="GO" id="GO:0005829">
    <property type="term" value="C:cytosol"/>
    <property type="evidence" value="ECO:0007669"/>
    <property type="project" value="TreeGrafter"/>
</dbReference>
<dbReference type="GO" id="GO:0004372">
    <property type="term" value="F:glycine hydroxymethyltransferase activity"/>
    <property type="evidence" value="ECO:0007669"/>
    <property type="project" value="UniProtKB-UniRule"/>
</dbReference>
<dbReference type="GO" id="GO:0030170">
    <property type="term" value="F:pyridoxal phosphate binding"/>
    <property type="evidence" value="ECO:0007669"/>
    <property type="project" value="UniProtKB-UniRule"/>
</dbReference>
<dbReference type="GO" id="GO:0019264">
    <property type="term" value="P:glycine biosynthetic process from serine"/>
    <property type="evidence" value="ECO:0007669"/>
    <property type="project" value="UniProtKB-UniRule"/>
</dbReference>
<dbReference type="GO" id="GO:0035999">
    <property type="term" value="P:tetrahydrofolate interconversion"/>
    <property type="evidence" value="ECO:0007669"/>
    <property type="project" value="UniProtKB-UniRule"/>
</dbReference>
<dbReference type="CDD" id="cd00378">
    <property type="entry name" value="SHMT"/>
    <property type="match status" value="1"/>
</dbReference>
<dbReference type="FunFam" id="3.40.640.10:FF:000001">
    <property type="entry name" value="Serine hydroxymethyltransferase"/>
    <property type="match status" value="1"/>
</dbReference>
<dbReference type="FunFam" id="3.90.1150.10:FF:000003">
    <property type="entry name" value="Serine hydroxymethyltransferase"/>
    <property type="match status" value="1"/>
</dbReference>
<dbReference type="Gene3D" id="3.90.1150.10">
    <property type="entry name" value="Aspartate Aminotransferase, domain 1"/>
    <property type="match status" value="1"/>
</dbReference>
<dbReference type="Gene3D" id="3.40.640.10">
    <property type="entry name" value="Type I PLP-dependent aspartate aminotransferase-like (Major domain)"/>
    <property type="match status" value="1"/>
</dbReference>
<dbReference type="HAMAP" id="MF_00051">
    <property type="entry name" value="SHMT"/>
    <property type="match status" value="1"/>
</dbReference>
<dbReference type="InterPro" id="IPR015424">
    <property type="entry name" value="PyrdxlP-dep_Trfase"/>
</dbReference>
<dbReference type="InterPro" id="IPR015421">
    <property type="entry name" value="PyrdxlP-dep_Trfase_major"/>
</dbReference>
<dbReference type="InterPro" id="IPR015422">
    <property type="entry name" value="PyrdxlP-dep_Trfase_small"/>
</dbReference>
<dbReference type="InterPro" id="IPR001085">
    <property type="entry name" value="Ser_HO-MeTrfase"/>
</dbReference>
<dbReference type="InterPro" id="IPR049943">
    <property type="entry name" value="Ser_HO-MeTrfase-like"/>
</dbReference>
<dbReference type="InterPro" id="IPR019798">
    <property type="entry name" value="Ser_HO-MeTrfase_PLP_BS"/>
</dbReference>
<dbReference type="InterPro" id="IPR039429">
    <property type="entry name" value="SHMT-like_dom"/>
</dbReference>
<dbReference type="NCBIfam" id="NF000586">
    <property type="entry name" value="PRK00011.1"/>
    <property type="match status" value="1"/>
</dbReference>
<dbReference type="PANTHER" id="PTHR11680">
    <property type="entry name" value="SERINE HYDROXYMETHYLTRANSFERASE"/>
    <property type="match status" value="1"/>
</dbReference>
<dbReference type="PANTHER" id="PTHR11680:SF50">
    <property type="entry name" value="SERINE HYDROXYMETHYLTRANSFERASE"/>
    <property type="match status" value="1"/>
</dbReference>
<dbReference type="Pfam" id="PF00464">
    <property type="entry name" value="SHMT"/>
    <property type="match status" value="1"/>
</dbReference>
<dbReference type="PIRSF" id="PIRSF000412">
    <property type="entry name" value="SHMT"/>
    <property type="match status" value="1"/>
</dbReference>
<dbReference type="SUPFAM" id="SSF53383">
    <property type="entry name" value="PLP-dependent transferases"/>
    <property type="match status" value="1"/>
</dbReference>
<dbReference type="PROSITE" id="PS00096">
    <property type="entry name" value="SHMT"/>
    <property type="match status" value="1"/>
</dbReference>
<gene>
    <name evidence="1" type="primary">glyA</name>
    <name type="ordered locus">A1S_2307</name>
</gene>
<sequence>MFANISISEFDPELAQAIASEDERQEAHIELIASENYCSPAVMEAQGSKLTNKYAEGYPGKRYYGGCEFVDVIEQMAIDRAKELFGADYANVQPHAGSQANSAVYLALLNPGDTVLGMSLAHGGHLTHGAKVSFSGKTYNAVQYGLNAETGEIDYEEVERLALEHKPRMIVAGFSAYSRVVDWQRFRDIADKVGAYLFVDMAHVAGLVAAGVYPNPVQIADVTTTTTHKTLRGPRSGLILAKANEEIEKKLQSAVFPGNQGGPLMHAIAAKAICFKEAMSDDFKAYQQQVVKNAQAMAEVFIARGYDVVSGGTDNHLFLLSLIKQDVTGKDADAWLGAAHITVNKNSVPNDPRSPFVTSGIRIGTPAVTTRGFGEAEVRELAGWIADVIDSKGDEKVIADVKAKVEAVCAKFPVYAK</sequence>
<organism>
    <name type="scientific">Acinetobacter baumannii (strain ATCC 17978 / DSM 105126 / CIP 53.77 / LMG 1025 / NCDC KC755 / 5377)</name>
    <dbReference type="NCBI Taxonomy" id="400667"/>
    <lineage>
        <taxon>Bacteria</taxon>
        <taxon>Pseudomonadati</taxon>
        <taxon>Pseudomonadota</taxon>
        <taxon>Gammaproteobacteria</taxon>
        <taxon>Moraxellales</taxon>
        <taxon>Moraxellaceae</taxon>
        <taxon>Acinetobacter</taxon>
        <taxon>Acinetobacter calcoaceticus/baumannii complex</taxon>
    </lineage>
</organism>
<proteinExistence type="inferred from homology"/>
<reference key="1">
    <citation type="journal article" date="2007" name="Genes Dev.">
        <title>New insights into Acinetobacter baumannii pathogenesis revealed by high-density pyrosequencing and transposon mutagenesis.</title>
        <authorList>
            <person name="Smith M.G."/>
            <person name="Gianoulis T.A."/>
            <person name="Pukatzki S."/>
            <person name="Mekalanos J.J."/>
            <person name="Ornston L.N."/>
            <person name="Gerstein M."/>
            <person name="Snyder M."/>
        </authorList>
    </citation>
    <scope>NUCLEOTIDE SEQUENCE [LARGE SCALE GENOMIC DNA]</scope>
    <source>
        <strain>ATCC 17978 / DSM 105126 / CIP 53.77 / LMG 1025 / NCDC KC755 / 5377</strain>
    </source>
</reference>